<keyword id="KW-0143">Chaperone</keyword>
<keyword id="KW-0963">Cytoplasm</keyword>
<keyword id="KW-0346">Stress response</keyword>
<accession>A8G203</accession>
<protein>
    <recommendedName>
        <fullName evidence="1">Protein GrpE</fullName>
    </recommendedName>
    <alternativeName>
        <fullName evidence="1">HSP-70 cofactor</fullName>
    </alternativeName>
</protein>
<sequence>MIENQSDNIDNKEKDVSNQDNAPEDISSEQNSTNENDELTSQKKEAINTEELKNTISNNDARLKQLEKEHETLKNQYVRISADFDNFRKRQSRDQDDLKIQIVSKTLTAILPIVDNFERARQQLQPESEEAQALHRSYQGLYKQLVEVLKQQGVSPMRVVGQQFDPNLHEAVLREPSEESDEDFIIEELQRGYHLEGKVLRHALVKVSMGPGKQNSQQEVEKDTVEEDVNSEVNTSEDV</sequence>
<feature type="chain" id="PRO_1000065521" description="Protein GrpE">
    <location>
        <begin position="1"/>
        <end position="239"/>
    </location>
</feature>
<feature type="region of interest" description="Disordered" evidence="2">
    <location>
        <begin position="1"/>
        <end position="56"/>
    </location>
</feature>
<feature type="region of interest" description="Disordered" evidence="2">
    <location>
        <begin position="208"/>
        <end position="239"/>
    </location>
</feature>
<feature type="compositionally biased region" description="Basic and acidic residues" evidence="2">
    <location>
        <begin position="40"/>
        <end position="53"/>
    </location>
</feature>
<feature type="compositionally biased region" description="Acidic residues" evidence="2">
    <location>
        <begin position="224"/>
        <end position="239"/>
    </location>
</feature>
<proteinExistence type="inferred from homology"/>
<comment type="function">
    <text evidence="1">Participates actively in the response to hyperosmotic and heat shock by preventing the aggregation of stress-denatured proteins, in association with DnaK and GrpE. It is the nucleotide exchange factor for DnaK and may function as a thermosensor. Unfolded proteins bind initially to DnaJ; upon interaction with the DnaJ-bound protein, DnaK hydrolyzes its bound ATP, resulting in the formation of a stable complex. GrpE releases ADP from DnaK; ATP binding to DnaK triggers the release of the substrate protein, thus completing the reaction cycle. Several rounds of ATP-dependent interactions between DnaJ, DnaK and GrpE are required for fully efficient folding.</text>
</comment>
<comment type="subunit">
    <text evidence="1">Homodimer.</text>
</comment>
<comment type="subcellular location">
    <subcellularLocation>
        <location evidence="1">Cytoplasm</location>
    </subcellularLocation>
</comment>
<comment type="similarity">
    <text evidence="1">Belongs to the GrpE family.</text>
</comment>
<organism>
    <name type="scientific">Prochlorococcus marinus (strain MIT 9215)</name>
    <dbReference type="NCBI Taxonomy" id="93060"/>
    <lineage>
        <taxon>Bacteria</taxon>
        <taxon>Bacillati</taxon>
        <taxon>Cyanobacteriota</taxon>
        <taxon>Cyanophyceae</taxon>
        <taxon>Synechococcales</taxon>
        <taxon>Prochlorococcaceae</taxon>
        <taxon>Prochlorococcus</taxon>
    </lineage>
</organism>
<gene>
    <name evidence="1" type="primary">grpE</name>
    <name type="ordered locus">P9215_00151</name>
</gene>
<reference key="1">
    <citation type="journal article" date="2007" name="PLoS Genet.">
        <title>Patterns and implications of gene gain and loss in the evolution of Prochlorococcus.</title>
        <authorList>
            <person name="Kettler G.C."/>
            <person name="Martiny A.C."/>
            <person name="Huang K."/>
            <person name="Zucker J."/>
            <person name="Coleman M.L."/>
            <person name="Rodrigue S."/>
            <person name="Chen F."/>
            <person name="Lapidus A."/>
            <person name="Ferriera S."/>
            <person name="Johnson J."/>
            <person name="Steglich C."/>
            <person name="Church G.M."/>
            <person name="Richardson P."/>
            <person name="Chisholm S.W."/>
        </authorList>
    </citation>
    <scope>NUCLEOTIDE SEQUENCE [LARGE SCALE GENOMIC DNA]</scope>
    <source>
        <strain>MIT 9215</strain>
    </source>
</reference>
<name>GRPE_PROM2</name>
<dbReference type="EMBL" id="CP000825">
    <property type="protein sequence ID" value="ABV49634.1"/>
    <property type="molecule type" value="Genomic_DNA"/>
</dbReference>
<dbReference type="RefSeq" id="WP_012006820.1">
    <property type="nucleotide sequence ID" value="NC_009840.1"/>
</dbReference>
<dbReference type="SMR" id="A8G203"/>
<dbReference type="STRING" id="93060.P9215_00151"/>
<dbReference type="KEGG" id="pmh:P9215_00151"/>
<dbReference type="eggNOG" id="COG0576">
    <property type="taxonomic scope" value="Bacteria"/>
</dbReference>
<dbReference type="HOGENOM" id="CLU_057217_5_1_3"/>
<dbReference type="OrthoDB" id="9812586at2"/>
<dbReference type="Proteomes" id="UP000002014">
    <property type="component" value="Chromosome"/>
</dbReference>
<dbReference type="GO" id="GO:0005737">
    <property type="term" value="C:cytoplasm"/>
    <property type="evidence" value="ECO:0007669"/>
    <property type="project" value="UniProtKB-SubCell"/>
</dbReference>
<dbReference type="GO" id="GO:0000774">
    <property type="term" value="F:adenyl-nucleotide exchange factor activity"/>
    <property type="evidence" value="ECO:0007669"/>
    <property type="project" value="InterPro"/>
</dbReference>
<dbReference type="GO" id="GO:0042803">
    <property type="term" value="F:protein homodimerization activity"/>
    <property type="evidence" value="ECO:0007669"/>
    <property type="project" value="InterPro"/>
</dbReference>
<dbReference type="GO" id="GO:0051087">
    <property type="term" value="F:protein-folding chaperone binding"/>
    <property type="evidence" value="ECO:0007669"/>
    <property type="project" value="InterPro"/>
</dbReference>
<dbReference type="GO" id="GO:0051082">
    <property type="term" value="F:unfolded protein binding"/>
    <property type="evidence" value="ECO:0007669"/>
    <property type="project" value="TreeGrafter"/>
</dbReference>
<dbReference type="GO" id="GO:0006457">
    <property type="term" value="P:protein folding"/>
    <property type="evidence" value="ECO:0007669"/>
    <property type="project" value="InterPro"/>
</dbReference>
<dbReference type="CDD" id="cd00446">
    <property type="entry name" value="GrpE"/>
    <property type="match status" value="1"/>
</dbReference>
<dbReference type="FunFam" id="2.30.22.10:FF:000001">
    <property type="entry name" value="Protein GrpE"/>
    <property type="match status" value="1"/>
</dbReference>
<dbReference type="Gene3D" id="3.90.20.20">
    <property type="match status" value="1"/>
</dbReference>
<dbReference type="Gene3D" id="2.30.22.10">
    <property type="entry name" value="Head domain of nucleotide exchange factor GrpE"/>
    <property type="match status" value="1"/>
</dbReference>
<dbReference type="HAMAP" id="MF_01151">
    <property type="entry name" value="GrpE"/>
    <property type="match status" value="1"/>
</dbReference>
<dbReference type="InterPro" id="IPR000740">
    <property type="entry name" value="GrpE"/>
</dbReference>
<dbReference type="InterPro" id="IPR013805">
    <property type="entry name" value="GrpE_coiled_coil"/>
</dbReference>
<dbReference type="InterPro" id="IPR009012">
    <property type="entry name" value="GrpE_head"/>
</dbReference>
<dbReference type="NCBIfam" id="NF010738">
    <property type="entry name" value="PRK14140.1"/>
    <property type="match status" value="1"/>
</dbReference>
<dbReference type="NCBIfam" id="NF010741">
    <property type="entry name" value="PRK14143.1"/>
    <property type="match status" value="1"/>
</dbReference>
<dbReference type="PANTHER" id="PTHR21237">
    <property type="entry name" value="GRPE PROTEIN"/>
    <property type="match status" value="1"/>
</dbReference>
<dbReference type="PANTHER" id="PTHR21237:SF23">
    <property type="entry name" value="GRPE PROTEIN HOMOLOG, MITOCHONDRIAL"/>
    <property type="match status" value="1"/>
</dbReference>
<dbReference type="Pfam" id="PF01025">
    <property type="entry name" value="GrpE"/>
    <property type="match status" value="1"/>
</dbReference>
<dbReference type="PRINTS" id="PR00773">
    <property type="entry name" value="GRPEPROTEIN"/>
</dbReference>
<dbReference type="SUPFAM" id="SSF58014">
    <property type="entry name" value="Coiled-coil domain of nucleotide exchange factor GrpE"/>
    <property type="match status" value="1"/>
</dbReference>
<dbReference type="SUPFAM" id="SSF51064">
    <property type="entry name" value="Head domain of nucleotide exchange factor GrpE"/>
    <property type="match status" value="1"/>
</dbReference>
<dbReference type="PROSITE" id="PS01071">
    <property type="entry name" value="GRPE"/>
    <property type="match status" value="1"/>
</dbReference>
<evidence type="ECO:0000255" key="1">
    <source>
        <dbReference type="HAMAP-Rule" id="MF_01151"/>
    </source>
</evidence>
<evidence type="ECO:0000256" key="2">
    <source>
        <dbReference type="SAM" id="MobiDB-lite"/>
    </source>
</evidence>